<dbReference type="EC" id="2.5.1.141" evidence="1"/>
<dbReference type="EMBL" id="CP001020">
    <property type="protein sequence ID" value="ACJ20085.1"/>
    <property type="molecule type" value="Genomic_DNA"/>
</dbReference>
<dbReference type="RefSeq" id="WP_005768584.1">
    <property type="nucleotide sequence ID" value="NC_011528.1"/>
</dbReference>
<dbReference type="SMR" id="B6J736"/>
<dbReference type="KEGG" id="cbc:CbuK_0846"/>
<dbReference type="HOGENOM" id="CLU_029631_0_2_6"/>
<dbReference type="UniPathway" id="UPA00834">
    <property type="reaction ID" value="UER00712"/>
</dbReference>
<dbReference type="GO" id="GO:0005886">
    <property type="term" value="C:plasma membrane"/>
    <property type="evidence" value="ECO:0007669"/>
    <property type="project" value="UniProtKB-SubCell"/>
</dbReference>
<dbReference type="GO" id="GO:0008495">
    <property type="term" value="F:protoheme IX farnesyltransferase activity"/>
    <property type="evidence" value="ECO:0007669"/>
    <property type="project" value="UniProtKB-UniRule"/>
</dbReference>
<dbReference type="GO" id="GO:0048034">
    <property type="term" value="P:heme O biosynthetic process"/>
    <property type="evidence" value="ECO:0007669"/>
    <property type="project" value="UniProtKB-UniRule"/>
</dbReference>
<dbReference type="CDD" id="cd13957">
    <property type="entry name" value="PT_UbiA_Cox10"/>
    <property type="match status" value="1"/>
</dbReference>
<dbReference type="FunFam" id="1.10.357.140:FF:000001">
    <property type="entry name" value="Protoheme IX farnesyltransferase"/>
    <property type="match status" value="1"/>
</dbReference>
<dbReference type="Gene3D" id="1.10.357.140">
    <property type="entry name" value="UbiA prenyltransferase"/>
    <property type="match status" value="1"/>
</dbReference>
<dbReference type="HAMAP" id="MF_00154">
    <property type="entry name" value="CyoE_CtaB"/>
    <property type="match status" value="1"/>
</dbReference>
<dbReference type="InterPro" id="IPR006369">
    <property type="entry name" value="Protohaem_IX_farnesylTrfase"/>
</dbReference>
<dbReference type="InterPro" id="IPR000537">
    <property type="entry name" value="UbiA_prenyltransferase"/>
</dbReference>
<dbReference type="InterPro" id="IPR030470">
    <property type="entry name" value="UbiA_prenylTrfase_CS"/>
</dbReference>
<dbReference type="InterPro" id="IPR044878">
    <property type="entry name" value="UbiA_sf"/>
</dbReference>
<dbReference type="NCBIfam" id="TIGR01473">
    <property type="entry name" value="cyoE_ctaB"/>
    <property type="match status" value="1"/>
</dbReference>
<dbReference type="NCBIfam" id="NF003349">
    <property type="entry name" value="PRK04375.1-2"/>
    <property type="match status" value="1"/>
</dbReference>
<dbReference type="PANTHER" id="PTHR43448:SF7">
    <property type="entry name" value="4-HYDROXYBENZOATE SOLANESYLTRANSFERASE"/>
    <property type="match status" value="1"/>
</dbReference>
<dbReference type="PANTHER" id="PTHR43448">
    <property type="entry name" value="PROTOHEME IX FARNESYLTRANSFERASE, MITOCHONDRIAL"/>
    <property type="match status" value="1"/>
</dbReference>
<dbReference type="Pfam" id="PF01040">
    <property type="entry name" value="UbiA"/>
    <property type="match status" value="1"/>
</dbReference>
<dbReference type="PROSITE" id="PS00943">
    <property type="entry name" value="UBIA"/>
    <property type="match status" value="1"/>
</dbReference>
<reference key="1">
    <citation type="journal article" date="2009" name="Infect. Immun.">
        <title>Comparative genomics reveal extensive transposon-mediated genomic plasticity and diversity among potential effector proteins within the genus Coxiella.</title>
        <authorList>
            <person name="Beare P.A."/>
            <person name="Unsworth N."/>
            <person name="Andoh M."/>
            <person name="Voth D.E."/>
            <person name="Omsland A."/>
            <person name="Gilk S.D."/>
            <person name="Williams K.P."/>
            <person name="Sobral B.W."/>
            <person name="Kupko J.J. III"/>
            <person name="Porcella S.F."/>
            <person name="Samuel J.E."/>
            <person name="Heinzen R.A."/>
        </authorList>
    </citation>
    <scope>NUCLEOTIDE SEQUENCE [LARGE SCALE GENOMIC DNA]</scope>
    <source>
        <strain>CbuK_Q154</strain>
    </source>
</reference>
<keyword id="KW-0997">Cell inner membrane</keyword>
<keyword id="KW-1003">Cell membrane</keyword>
<keyword id="KW-0350">Heme biosynthesis</keyword>
<keyword id="KW-0472">Membrane</keyword>
<keyword id="KW-0808">Transferase</keyword>
<keyword id="KW-0812">Transmembrane</keyword>
<keyword id="KW-1133">Transmembrane helix</keyword>
<organism>
    <name type="scientific">Coxiella burnetii (strain CbuK_Q154)</name>
    <name type="common">Coxiella burnetii (strain Q154)</name>
    <dbReference type="NCBI Taxonomy" id="434924"/>
    <lineage>
        <taxon>Bacteria</taxon>
        <taxon>Pseudomonadati</taxon>
        <taxon>Pseudomonadota</taxon>
        <taxon>Gammaproteobacteria</taxon>
        <taxon>Legionellales</taxon>
        <taxon>Coxiellaceae</taxon>
        <taxon>Coxiella</taxon>
    </lineage>
</organism>
<name>CYOE_COXB1</name>
<accession>B6J736</accession>
<evidence type="ECO:0000255" key="1">
    <source>
        <dbReference type="HAMAP-Rule" id="MF_00154"/>
    </source>
</evidence>
<comment type="function">
    <text evidence="1">Converts heme B (protoheme IX) to heme O by substitution of the vinyl group on carbon 2 of heme B porphyrin ring with a hydroxyethyl farnesyl side group.</text>
</comment>
<comment type="catalytic activity">
    <reaction evidence="1">
        <text>heme b + (2E,6E)-farnesyl diphosphate + H2O = Fe(II)-heme o + diphosphate</text>
        <dbReference type="Rhea" id="RHEA:28070"/>
        <dbReference type="ChEBI" id="CHEBI:15377"/>
        <dbReference type="ChEBI" id="CHEBI:33019"/>
        <dbReference type="ChEBI" id="CHEBI:60344"/>
        <dbReference type="ChEBI" id="CHEBI:60530"/>
        <dbReference type="ChEBI" id="CHEBI:175763"/>
        <dbReference type="EC" id="2.5.1.141"/>
    </reaction>
</comment>
<comment type="pathway">
    <text evidence="1">Porphyrin-containing compound metabolism; heme O biosynthesis; heme O from protoheme: step 1/1.</text>
</comment>
<comment type="subcellular location">
    <subcellularLocation>
        <location evidence="1">Cell inner membrane</location>
        <topology evidence="1">Multi-pass membrane protein</topology>
    </subcellularLocation>
</comment>
<comment type="miscellaneous">
    <text evidence="1">Carbon 2 of the heme B porphyrin ring is defined according to the Fischer nomenclature.</text>
</comment>
<comment type="similarity">
    <text evidence="1">Belongs to the UbiA prenyltransferase family. Protoheme IX farnesyltransferase subfamily.</text>
</comment>
<proteinExistence type="inferred from homology"/>
<protein>
    <recommendedName>
        <fullName evidence="1">Protoheme IX farnesyltransferase</fullName>
        <ecNumber evidence="1">2.5.1.141</ecNumber>
    </recommendedName>
    <alternativeName>
        <fullName evidence="1">Heme B farnesyltransferase</fullName>
    </alternativeName>
    <alternativeName>
        <fullName evidence="1">Heme O synthase</fullName>
    </alternativeName>
</protein>
<gene>
    <name evidence="1" type="primary">cyoE</name>
    <name type="ordered locus">CbuK_0846</name>
</gene>
<sequence length="305" mass="34456">MRTRTEIVSTTQTSATWRDYFQLCKPRVVLLMLLTAIVGMCLASPGIVSWRVFLFGNLGIALAASSAAAINHLLEHHLDKLMRRTYRRPIVQGKINRKNAAIFAAILCILSMIILIAFVNLLTALLTFITLIGYAGFYTLYLKHATPQNIVIGGLAGAAPPLLGWVAVTGHIDPPALILLLIIFLWTPPHFWALAIHRIDDYAKANIPMLPNTHGIIYTKINILLYTLLLTAISFLPFVIMTSGWIYFSSVCLLNLGFLYWAIRLLTSQRKEIPMRTFQYSIWYLMLLFTALLVDHYVYLALKLY</sequence>
<feature type="chain" id="PRO_1000096919" description="Protoheme IX farnesyltransferase">
    <location>
        <begin position="1"/>
        <end position="305"/>
    </location>
</feature>
<feature type="transmembrane region" description="Helical" evidence="1">
    <location>
        <begin position="28"/>
        <end position="48"/>
    </location>
</feature>
<feature type="transmembrane region" description="Helical" evidence="1">
    <location>
        <begin position="52"/>
        <end position="72"/>
    </location>
</feature>
<feature type="transmembrane region" description="Helical" evidence="1">
    <location>
        <begin position="102"/>
        <end position="122"/>
    </location>
</feature>
<feature type="transmembrane region" description="Helical" evidence="1">
    <location>
        <begin position="123"/>
        <end position="143"/>
    </location>
</feature>
<feature type="transmembrane region" description="Helical" evidence="1">
    <location>
        <begin position="150"/>
        <end position="170"/>
    </location>
</feature>
<feature type="transmembrane region" description="Helical" evidence="1">
    <location>
        <begin position="176"/>
        <end position="196"/>
    </location>
</feature>
<feature type="transmembrane region" description="Helical" evidence="1">
    <location>
        <begin position="221"/>
        <end position="241"/>
    </location>
</feature>
<feature type="transmembrane region" description="Helical" evidence="1">
    <location>
        <begin position="243"/>
        <end position="263"/>
    </location>
</feature>
<feature type="transmembrane region" description="Helical" evidence="1">
    <location>
        <begin position="282"/>
        <end position="302"/>
    </location>
</feature>